<protein>
    <recommendedName>
        <fullName evidence="1">Arginine biosynthesis bifunctional protein ArgJ</fullName>
    </recommendedName>
    <domain>
        <recommendedName>
            <fullName evidence="1">Glutamate N-acetyltransferase</fullName>
            <ecNumber evidence="1">2.3.1.35</ecNumber>
        </recommendedName>
        <alternativeName>
            <fullName evidence="1">Ornithine acetyltransferase</fullName>
            <shortName evidence="1">OATase</shortName>
        </alternativeName>
        <alternativeName>
            <fullName evidence="1">Ornithine transacetylase</fullName>
        </alternativeName>
    </domain>
    <domain>
        <recommendedName>
            <fullName evidence="1">Amino-acid acetyltransferase</fullName>
            <ecNumber evidence="1">2.3.1.1</ecNumber>
        </recommendedName>
        <alternativeName>
            <fullName evidence="1">N-acetylglutamate synthase</fullName>
            <shortName evidence="1">AGSase</shortName>
        </alternativeName>
    </domain>
    <component>
        <recommendedName>
            <fullName evidence="1">Arginine biosynthesis bifunctional protein ArgJ alpha chain</fullName>
        </recommendedName>
    </component>
    <component>
        <recommendedName>
            <fullName evidence="1">Arginine biosynthesis bifunctional protein ArgJ beta chain</fullName>
        </recommendedName>
    </component>
</protein>
<gene>
    <name evidence="1" type="primary">argJ</name>
    <name type="ordered locus">MCA1679</name>
</gene>
<feature type="chain" id="PRO_0000227232" description="Arginine biosynthesis bifunctional protein ArgJ alpha chain" evidence="1">
    <location>
        <begin position="1"/>
        <end position="192"/>
    </location>
</feature>
<feature type="chain" id="PRO_0000227233" description="Arginine biosynthesis bifunctional protein ArgJ beta chain" evidence="1">
    <location>
        <begin position="193"/>
        <end position="408"/>
    </location>
</feature>
<feature type="active site" description="Nucleophile" evidence="1">
    <location>
        <position position="193"/>
    </location>
</feature>
<feature type="binding site" evidence="1">
    <location>
        <position position="156"/>
    </location>
    <ligand>
        <name>substrate</name>
    </ligand>
</feature>
<feature type="binding site" evidence="1">
    <location>
        <position position="182"/>
    </location>
    <ligand>
        <name>substrate</name>
    </ligand>
</feature>
<feature type="binding site" evidence="1">
    <location>
        <position position="193"/>
    </location>
    <ligand>
        <name>substrate</name>
    </ligand>
</feature>
<feature type="binding site" evidence="1">
    <location>
        <position position="279"/>
    </location>
    <ligand>
        <name>substrate</name>
    </ligand>
</feature>
<feature type="binding site" evidence="1">
    <location>
        <position position="403"/>
    </location>
    <ligand>
        <name>substrate</name>
    </ligand>
</feature>
<feature type="binding site" evidence="1">
    <location>
        <position position="408"/>
    </location>
    <ligand>
        <name>substrate</name>
    </ligand>
</feature>
<feature type="site" description="Involved in the stabilization of negative charge on the oxyanion by the formation of the oxyanion hole" evidence="1">
    <location>
        <position position="119"/>
    </location>
</feature>
<feature type="site" description="Involved in the stabilization of negative charge on the oxyanion by the formation of the oxyanion hole" evidence="1">
    <location>
        <position position="120"/>
    </location>
</feature>
<feature type="site" description="Cleavage; by autolysis" evidence="1">
    <location>
        <begin position="192"/>
        <end position="193"/>
    </location>
</feature>
<proteinExistence type="inferred from homology"/>
<comment type="function">
    <text evidence="1">Catalyzes two activities which are involved in the cyclic version of arginine biosynthesis: the synthesis of N-acetylglutamate from glutamate and acetyl-CoA as the acetyl donor, and of ornithine by transacetylation between N(2)-acetylornithine and glutamate.</text>
</comment>
<comment type="catalytic activity">
    <reaction evidence="1">
        <text>N(2)-acetyl-L-ornithine + L-glutamate = N-acetyl-L-glutamate + L-ornithine</text>
        <dbReference type="Rhea" id="RHEA:15349"/>
        <dbReference type="ChEBI" id="CHEBI:29985"/>
        <dbReference type="ChEBI" id="CHEBI:44337"/>
        <dbReference type="ChEBI" id="CHEBI:46911"/>
        <dbReference type="ChEBI" id="CHEBI:57805"/>
        <dbReference type="EC" id="2.3.1.35"/>
    </reaction>
</comment>
<comment type="catalytic activity">
    <reaction evidence="1">
        <text>L-glutamate + acetyl-CoA = N-acetyl-L-glutamate + CoA + H(+)</text>
        <dbReference type="Rhea" id="RHEA:24292"/>
        <dbReference type="ChEBI" id="CHEBI:15378"/>
        <dbReference type="ChEBI" id="CHEBI:29985"/>
        <dbReference type="ChEBI" id="CHEBI:44337"/>
        <dbReference type="ChEBI" id="CHEBI:57287"/>
        <dbReference type="ChEBI" id="CHEBI:57288"/>
        <dbReference type="EC" id="2.3.1.1"/>
    </reaction>
</comment>
<comment type="pathway">
    <text evidence="1">Amino-acid biosynthesis; L-arginine biosynthesis; L-ornithine and N-acetyl-L-glutamate from L-glutamate and N(2)-acetyl-L-ornithine (cyclic): step 1/1.</text>
</comment>
<comment type="pathway">
    <text evidence="1">Amino-acid biosynthesis; L-arginine biosynthesis; N(2)-acetyl-L-ornithine from L-glutamate: step 1/4.</text>
</comment>
<comment type="subunit">
    <text evidence="1">Heterotetramer of two alpha and two beta chains.</text>
</comment>
<comment type="subcellular location">
    <subcellularLocation>
        <location evidence="1">Cytoplasm</location>
    </subcellularLocation>
</comment>
<comment type="similarity">
    <text evidence="1">Belongs to the ArgJ family.</text>
</comment>
<dbReference type="EC" id="2.3.1.35" evidence="1"/>
<dbReference type="EC" id="2.3.1.1" evidence="1"/>
<dbReference type="EMBL" id="AE017282">
    <property type="protein sequence ID" value="AAU92094.1"/>
    <property type="molecule type" value="Genomic_DNA"/>
</dbReference>
<dbReference type="RefSeq" id="WP_010960937.1">
    <property type="nucleotide sequence ID" value="NC_002977.6"/>
</dbReference>
<dbReference type="SMR" id="Q607S6"/>
<dbReference type="STRING" id="243233.MCA1679"/>
<dbReference type="MEROPS" id="T05.001"/>
<dbReference type="GeneID" id="88223937"/>
<dbReference type="KEGG" id="mca:MCA1679"/>
<dbReference type="eggNOG" id="COG1364">
    <property type="taxonomic scope" value="Bacteria"/>
</dbReference>
<dbReference type="HOGENOM" id="CLU_027172_1_0_6"/>
<dbReference type="UniPathway" id="UPA00068">
    <property type="reaction ID" value="UER00106"/>
</dbReference>
<dbReference type="UniPathway" id="UPA00068">
    <property type="reaction ID" value="UER00111"/>
</dbReference>
<dbReference type="Proteomes" id="UP000006821">
    <property type="component" value="Chromosome"/>
</dbReference>
<dbReference type="GO" id="GO:0005737">
    <property type="term" value="C:cytoplasm"/>
    <property type="evidence" value="ECO:0007669"/>
    <property type="project" value="UniProtKB-SubCell"/>
</dbReference>
<dbReference type="GO" id="GO:0004358">
    <property type="term" value="F:glutamate N-acetyltransferase activity"/>
    <property type="evidence" value="ECO:0007669"/>
    <property type="project" value="UniProtKB-UniRule"/>
</dbReference>
<dbReference type="GO" id="GO:0004042">
    <property type="term" value="F:L-glutamate N-acetyltransferase activity"/>
    <property type="evidence" value="ECO:0007669"/>
    <property type="project" value="UniProtKB-UniRule"/>
</dbReference>
<dbReference type="GO" id="GO:0006526">
    <property type="term" value="P:L-arginine biosynthetic process"/>
    <property type="evidence" value="ECO:0007669"/>
    <property type="project" value="UniProtKB-UniRule"/>
</dbReference>
<dbReference type="GO" id="GO:0006592">
    <property type="term" value="P:ornithine biosynthetic process"/>
    <property type="evidence" value="ECO:0007669"/>
    <property type="project" value="TreeGrafter"/>
</dbReference>
<dbReference type="CDD" id="cd02152">
    <property type="entry name" value="OAT"/>
    <property type="match status" value="1"/>
</dbReference>
<dbReference type="FunFam" id="3.10.20.340:FF:000001">
    <property type="entry name" value="Arginine biosynthesis bifunctional protein ArgJ, chloroplastic"/>
    <property type="match status" value="1"/>
</dbReference>
<dbReference type="FunFam" id="3.60.70.12:FF:000001">
    <property type="entry name" value="Arginine biosynthesis bifunctional protein ArgJ, chloroplastic"/>
    <property type="match status" value="1"/>
</dbReference>
<dbReference type="Gene3D" id="3.10.20.340">
    <property type="entry name" value="ArgJ beta chain, C-terminal domain"/>
    <property type="match status" value="1"/>
</dbReference>
<dbReference type="Gene3D" id="3.60.70.12">
    <property type="entry name" value="L-amino peptidase D-ALA esterase/amidase"/>
    <property type="match status" value="1"/>
</dbReference>
<dbReference type="HAMAP" id="MF_01106">
    <property type="entry name" value="ArgJ"/>
    <property type="match status" value="1"/>
</dbReference>
<dbReference type="InterPro" id="IPR002813">
    <property type="entry name" value="Arg_biosynth_ArgJ"/>
</dbReference>
<dbReference type="InterPro" id="IPR016117">
    <property type="entry name" value="ArgJ-like_dom_sf"/>
</dbReference>
<dbReference type="InterPro" id="IPR042195">
    <property type="entry name" value="ArgJ_beta_C"/>
</dbReference>
<dbReference type="NCBIfam" id="TIGR00120">
    <property type="entry name" value="ArgJ"/>
    <property type="match status" value="1"/>
</dbReference>
<dbReference type="NCBIfam" id="NF003802">
    <property type="entry name" value="PRK05388.1"/>
    <property type="match status" value="1"/>
</dbReference>
<dbReference type="PANTHER" id="PTHR23100">
    <property type="entry name" value="ARGININE BIOSYNTHESIS BIFUNCTIONAL PROTEIN ARGJ"/>
    <property type="match status" value="1"/>
</dbReference>
<dbReference type="PANTHER" id="PTHR23100:SF0">
    <property type="entry name" value="ARGININE BIOSYNTHESIS BIFUNCTIONAL PROTEIN ARGJ, MITOCHONDRIAL"/>
    <property type="match status" value="1"/>
</dbReference>
<dbReference type="Pfam" id="PF01960">
    <property type="entry name" value="ArgJ"/>
    <property type="match status" value="1"/>
</dbReference>
<dbReference type="SUPFAM" id="SSF56266">
    <property type="entry name" value="DmpA/ArgJ-like"/>
    <property type="match status" value="1"/>
</dbReference>
<name>ARGJ_METCA</name>
<evidence type="ECO:0000255" key="1">
    <source>
        <dbReference type="HAMAP-Rule" id="MF_01106"/>
    </source>
</evidence>
<accession>Q607S6</accession>
<keyword id="KW-0012">Acyltransferase</keyword>
<keyword id="KW-0028">Amino-acid biosynthesis</keyword>
<keyword id="KW-0055">Arginine biosynthesis</keyword>
<keyword id="KW-0068">Autocatalytic cleavage</keyword>
<keyword id="KW-0963">Cytoplasm</keyword>
<keyword id="KW-0511">Multifunctional enzyme</keyword>
<keyword id="KW-1185">Reference proteome</keyword>
<keyword id="KW-0808">Transferase</keyword>
<sequence length="408" mass="43287">MAASPEDRNLSDIRLCPIAGIRLGTAAAAIKHVGRDDVLLIEMAEGSACAAVFTQNAFCAAPVTVAREHLRQAPRWLLVNSGNANAGTGTRGLADARASCEAVAALVGGRADRVMPFSTGVIGEYLPLDKIRAALPKAFEALSEDGWEAAARAIMTTDTRPKKAVRRIEIAGRPVVVSGIAKGAGMIHPNMATMLAFVATDARIGAGLLQSVLERAVNRSFNCITVDGDTSTNDACVLMASQRSEAPLIEPGSAHVEAFQSAVDAVLAELAEAIVRDGEGATKFIRILVEEAASEDEARLVGKTIAHSPLVKTAFFASDPNWGRILAAVGRAGCKDLDISRVAIWLDEVRIVAAGARDREYTEARGITVMRRPEITVRVSLGRGQASARVMTCDLSLDYVRINAEYRT</sequence>
<reference key="1">
    <citation type="journal article" date="2004" name="PLoS Biol.">
        <title>Genomic insights into methanotrophy: the complete genome sequence of Methylococcus capsulatus (Bath).</title>
        <authorList>
            <person name="Ward N.L."/>
            <person name="Larsen O."/>
            <person name="Sakwa J."/>
            <person name="Bruseth L."/>
            <person name="Khouri H.M."/>
            <person name="Durkin A.S."/>
            <person name="Dimitrov G."/>
            <person name="Jiang L."/>
            <person name="Scanlan D."/>
            <person name="Kang K.H."/>
            <person name="Lewis M.R."/>
            <person name="Nelson K.E."/>
            <person name="Methe B.A."/>
            <person name="Wu M."/>
            <person name="Heidelberg J.F."/>
            <person name="Paulsen I.T."/>
            <person name="Fouts D.E."/>
            <person name="Ravel J."/>
            <person name="Tettelin H."/>
            <person name="Ren Q."/>
            <person name="Read T.D."/>
            <person name="DeBoy R.T."/>
            <person name="Seshadri R."/>
            <person name="Salzberg S.L."/>
            <person name="Jensen H.B."/>
            <person name="Birkeland N.K."/>
            <person name="Nelson W.C."/>
            <person name="Dodson R.J."/>
            <person name="Grindhaug S.H."/>
            <person name="Holt I.E."/>
            <person name="Eidhammer I."/>
            <person name="Jonasen I."/>
            <person name="Vanaken S."/>
            <person name="Utterback T.R."/>
            <person name="Feldblyum T.V."/>
            <person name="Fraser C.M."/>
            <person name="Lillehaug J.R."/>
            <person name="Eisen J.A."/>
        </authorList>
    </citation>
    <scope>NUCLEOTIDE SEQUENCE [LARGE SCALE GENOMIC DNA]</scope>
    <source>
        <strain>ATCC 33009 / NCIMB 11132 / Bath</strain>
    </source>
</reference>
<organism>
    <name type="scientific">Methylococcus capsulatus (strain ATCC 33009 / NCIMB 11132 / Bath)</name>
    <dbReference type="NCBI Taxonomy" id="243233"/>
    <lineage>
        <taxon>Bacteria</taxon>
        <taxon>Pseudomonadati</taxon>
        <taxon>Pseudomonadota</taxon>
        <taxon>Gammaproteobacteria</taxon>
        <taxon>Methylococcales</taxon>
        <taxon>Methylococcaceae</taxon>
        <taxon>Methylococcus</taxon>
    </lineage>
</organism>